<evidence type="ECO:0000255" key="1">
    <source>
        <dbReference type="HAMAP-Rule" id="MF_00126"/>
    </source>
</evidence>
<evidence type="ECO:0000305" key="2"/>
<keyword id="KW-0030">Aminoacyl-tRNA synthetase</keyword>
<keyword id="KW-0067">ATP-binding</keyword>
<keyword id="KW-0963">Cytoplasm</keyword>
<keyword id="KW-0436">Ligase</keyword>
<keyword id="KW-0547">Nucleotide-binding</keyword>
<keyword id="KW-0648">Protein biosynthesis</keyword>
<organism>
    <name type="scientific">Xylella fastidiosa (strain 9a5c)</name>
    <dbReference type="NCBI Taxonomy" id="160492"/>
    <lineage>
        <taxon>Bacteria</taxon>
        <taxon>Pseudomonadati</taxon>
        <taxon>Pseudomonadota</taxon>
        <taxon>Gammaproteobacteria</taxon>
        <taxon>Lysobacterales</taxon>
        <taxon>Lysobacteraceae</taxon>
        <taxon>Xylella</taxon>
    </lineage>
</organism>
<comment type="catalytic activity">
    <reaction evidence="1">
        <text>tRNA(Gln) + L-glutamine + ATP = L-glutaminyl-tRNA(Gln) + AMP + diphosphate</text>
        <dbReference type="Rhea" id="RHEA:20121"/>
        <dbReference type="Rhea" id="RHEA-COMP:9662"/>
        <dbReference type="Rhea" id="RHEA-COMP:9681"/>
        <dbReference type="ChEBI" id="CHEBI:30616"/>
        <dbReference type="ChEBI" id="CHEBI:33019"/>
        <dbReference type="ChEBI" id="CHEBI:58359"/>
        <dbReference type="ChEBI" id="CHEBI:78442"/>
        <dbReference type="ChEBI" id="CHEBI:78521"/>
        <dbReference type="ChEBI" id="CHEBI:456215"/>
        <dbReference type="EC" id="6.1.1.18"/>
    </reaction>
</comment>
<comment type="subunit">
    <text evidence="1">Monomer.</text>
</comment>
<comment type="subcellular location">
    <subcellularLocation>
        <location evidence="1">Cytoplasm</location>
    </subcellularLocation>
</comment>
<comment type="similarity">
    <text evidence="1 2">Belongs to the class-I aminoacyl-tRNA synthetase family.</text>
</comment>
<proteinExistence type="inferred from homology"/>
<sequence>MSEITSTDARAQPEKKDFIRQIIREDLAHGTHTHIRTRFPPEPNGYLHIGHAKAICLDFGVAAEFGGHCTLRMDDTNPSKEDPAFAAAIQDDVSWLGFHWNALRHTSDYFEVLYLAAEKLITDGKAYVCDLNSEQVREYRGTLTEAGRPSPWRERSPDENLELFRQMRAGTFPDGTRTLRAKIDMASGNINLRDPALYRIKHVEHQNTGNTWPIYPMYDFAHALSDAIEGITHSLCTLEFEDHRPLYDWCVNHVDLPNNSHLLKPLLDKGFPQEPSQPRQIEFSRLNINYTVMSKRKLTALVDEKLVEGWDDPRMYTLQGLRRRGYTPAAMRLFVERIGISKQNSIIDFSVLENCLRENLDTIAPRRMATIAPLKLVLTNLPEDHEEQLIFPNHPKDDTQGTRTMPFSRELWIERDDFSEIPPKGWKRLVPGGEVRLRGAGIARVDEVVKNAAGDIIALHGWLDPTSRPGMEGAHRKVKGTIHWVSAPHAVAAEIRLYDRLFSVEKPDDNTDGKTYRDVLNPDSKRVVHGYIEPAAAQTAPEHAFQFERLGYFVTDRHDHDAAHPVFNRSVTLRDTWQRD</sequence>
<protein>
    <recommendedName>
        <fullName evidence="1">Glutamine--tRNA ligase</fullName>
        <ecNumber evidence="1">6.1.1.18</ecNumber>
    </recommendedName>
    <alternativeName>
        <fullName evidence="1">Glutaminyl-tRNA synthetase</fullName>
        <shortName evidence="1">GlnRS</shortName>
    </alternativeName>
</protein>
<gene>
    <name evidence="1" type="primary">glnS</name>
    <name type="ordered locus">XF_1338</name>
</gene>
<reference key="1">
    <citation type="journal article" date="2000" name="Nature">
        <title>The genome sequence of the plant pathogen Xylella fastidiosa.</title>
        <authorList>
            <person name="Simpson A.J.G."/>
            <person name="Reinach F.C."/>
            <person name="Arruda P."/>
            <person name="Abreu F.A."/>
            <person name="Acencio M."/>
            <person name="Alvarenga R."/>
            <person name="Alves L.M.C."/>
            <person name="Araya J.E."/>
            <person name="Baia G.S."/>
            <person name="Baptista C.S."/>
            <person name="Barros M.H."/>
            <person name="Bonaccorsi E.D."/>
            <person name="Bordin S."/>
            <person name="Bove J.M."/>
            <person name="Briones M.R.S."/>
            <person name="Bueno M.R.P."/>
            <person name="Camargo A.A."/>
            <person name="Camargo L.E.A."/>
            <person name="Carraro D.M."/>
            <person name="Carrer H."/>
            <person name="Colauto N.B."/>
            <person name="Colombo C."/>
            <person name="Costa F.F."/>
            <person name="Costa M.C.R."/>
            <person name="Costa-Neto C.M."/>
            <person name="Coutinho L.L."/>
            <person name="Cristofani M."/>
            <person name="Dias-Neto E."/>
            <person name="Docena C."/>
            <person name="El-Dorry H."/>
            <person name="Facincani A.P."/>
            <person name="Ferreira A.J.S."/>
            <person name="Ferreira V.C.A."/>
            <person name="Ferro J.A."/>
            <person name="Fraga J.S."/>
            <person name="Franca S.C."/>
            <person name="Franco M.C."/>
            <person name="Frohme M."/>
            <person name="Furlan L.R."/>
            <person name="Garnier M."/>
            <person name="Goldman G.H."/>
            <person name="Goldman M.H.S."/>
            <person name="Gomes S.L."/>
            <person name="Gruber A."/>
            <person name="Ho P.L."/>
            <person name="Hoheisel J.D."/>
            <person name="Junqueira M.L."/>
            <person name="Kemper E.L."/>
            <person name="Kitajima J.P."/>
            <person name="Krieger J.E."/>
            <person name="Kuramae E.E."/>
            <person name="Laigret F."/>
            <person name="Lambais M.R."/>
            <person name="Leite L.C.C."/>
            <person name="Lemos E.G.M."/>
            <person name="Lemos M.V.F."/>
            <person name="Lopes S.A."/>
            <person name="Lopes C.R."/>
            <person name="Machado J.A."/>
            <person name="Machado M.A."/>
            <person name="Madeira A.M.B.N."/>
            <person name="Madeira H.M.F."/>
            <person name="Marino C.L."/>
            <person name="Marques M.V."/>
            <person name="Martins E.A.L."/>
            <person name="Martins E.M.F."/>
            <person name="Matsukuma A.Y."/>
            <person name="Menck C.F.M."/>
            <person name="Miracca E.C."/>
            <person name="Miyaki C.Y."/>
            <person name="Monteiro-Vitorello C.B."/>
            <person name="Moon D.H."/>
            <person name="Nagai M.A."/>
            <person name="Nascimento A.L.T.O."/>
            <person name="Netto L.E.S."/>
            <person name="Nhani A. Jr."/>
            <person name="Nobrega F.G."/>
            <person name="Nunes L.R."/>
            <person name="Oliveira M.A."/>
            <person name="de Oliveira M.C."/>
            <person name="de Oliveira R.C."/>
            <person name="Palmieri D.A."/>
            <person name="Paris A."/>
            <person name="Peixoto B.R."/>
            <person name="Pereira G.A.G."/>
            <person name="Pereira H.A. Jr."/>
            <person name="Pesquero J.B."/>
            <person name="Quaggio R.B."/>
            <person name="Roberto P.G."/>
            <person name="Rodrigues V."/>
            <person name="de Rosa A.J.M."/>
            <person name="de Rosa V.E. Jr."/>
            <person name="de Sa R.G."/>
            <person name="Santelli R.V."/>
            <person name="Sawasaki H.E."/>
            <person name="da Silva A.C.R."/>
            <person name="da Silva A.M."/>
            <person name="da Silva F.R."/>
            <person name="Silva W.A. Jr."/>
            <person name="da Silveira J.F."/>
            <person name="Silvestri M.L.Z."/>
            <person name="Siqueira W.J."/>
            <person name="de Souza A.A."/>
            <person name="de Souza A.P."/>
            <person name="Terenzi M.F."/>
            <person name="Truffi D."/>
            <person name="Tsai S.M."/>
            <person name="Tsuhako M.H."/>
            <person name="Vallada H."/>
            <person name="Van Sluys M.A."/>
            <person name="Verjovski-Almeida S."/>
            <person name="Vettore A.L."/>
            <person name="Zago M.A."/>
            <person name="Zatz M."/>
            <person name="Meidanis J."/>
            <person name="Setubal J.C."/>
        </authorList>
    </citation>
    <scope>NUCLEOTIDE SEQUENCE [LARGE SCALE GENOMIC DNA]</scope>
    <source>
        <strain>9a5c</strain>
    </source>
</reference>
<dbReference type="EC" id="6.1.1.18" evidence="1"/>
<dbReference type="EMBL" id="AE003849">
    <property type="protein sequence ID" value="AAF84147.1"/>
    <property type="molecule type" value="Genomic_DNA"/>
</dbReference>
<dbReference type="PIR" id="G82693">
    <property type="entry name" value="G82693"/>
</dbReference>
<dbReference type="RefSeq" id="WP_010893843.1">
    <property type="nucleotide sequence ID" value="NC_002488.3"/>
</dbReference>
<dbReference type="SMR" id="Q9PDP1"/>
<dbReference type="STRING" id="160492.XF_1338"/>
<dbReference type="KEGG" id="xfa:XF_1338"/>
<dbReference type="eggNOG" id="COG0008">
    <property type="taxonomic scope" value="Bacteria"/>
</dbReference>
<dbReference type="HOGENOM" id="CLU_001882_2_3_6"/>
<dbReference type="Proteomes" id="UP000000812">
    <property type="component" value="Chromosome"/>
</dbReference>
<dbReference type="GO" id="GO:0005829">
    <property type="term" value="C:cytosol"/>
    <property type="evidence" value="ECO:0007669"/>
    <property type="project" value="TreeGrafter"/>
</dbReference>
<dbReference type="GO" id="GO:0005524">
    <property type="term" value="F:ATP binding"/>
    <property type="evidence" value="ECO:0007669"/>
    <property type="project" value="UniProtKB-UniRule"/>
</dbReference>
<dbReference type="GO" id="GO:0004819">
    <property type="term" value="F:glutamine-tRNA ligase activity"/>
    <property type="evidence" value="ECO:0007669"/>
    <property type="project" value="UniProtKB-UniRule"/>
</dbReference>
<dbReference type="GO" id="GO:0006425">
    <property type="term" value="P:glutaminyl-tRNA aminoacylation"/>
    <property type="evidence" value="ECO:0007669"/>
    <property type="project" value="InterPro"/>
</dbReference>
<dbReference type="GO" id="GO:0006424">
    <property type="term" value="P:glutamyl-tRNA aminoacylation"/>
    <property type="evidence" value="ECO:0007669"/>
    <property type="project" value="UniProtKB-UniRule"/>
</dbReference>
<dbReference type="FunFam" id="1.10.1160.10:FF:000001">
    <property type="entry name" value="Glutamine--tRNA ligase"/>
    <property type="match status" value="1"/>
</dbReference>
<dbReference type="FunFam" id="2.40.240.10:FF:000020">
    <property type="entry name" value="Glutamine--tRNA ligase"/>
    <property type="match status" value="1"/>
</dbReference>
<dbReference type="FunFam" id="3.90.800.10:FF:000001">
    <property type="entry name" value="Glutamine--tRNA ligase"/>
    <property type="match status" value="1"/>
</dbReference>
<dbReference type="FunFam" id="3.40.50.620:FF:000037">
    <property type="entry name" value="Glutamine--tRNA ligase cytoplasmic"/>
    <property type="match status" value="1"/>
</dbReference>
<dbReference type="Gene3D" id="1.10.1160.10">
    <property type="entry name" value="Glutamyl-trna Synthetase, Domain 2"/>
    <property type="match status" value="1"/>
</dbReference>
<dbReference type="Gene3D" id="3.90.800.10">
    <property type="entry name" value="Glutamyl-tRNA Synthetase, Domain 3"/>
    <property type="match status" value="1"/>
</dbReference>
<dbReference type="Gene3D" id="3.40.50.620">
    <property type="entry name" value="HUPs"/>
    <property type="match status" value="1"/>
</dbReference>
<dbReference type="Gene3D" id="2.40.240.10">
    <property type="entry name" value="Ribosomal Protein L25, Chain P"/>
    <property type="match status" value="2"/>
</dbReference>
<dbReference type="HAMAP" id="MF_00126">
    <property type="entry name" value="Gln_tRNA_synth"/>
    <property type="match status" value="1"/>
</dbReference>
<dbReference type="InterPro" id="IPR001412">
    <property type="entry name" value="aa-tRNA-synth_I_CS"/>
</dbReference>
<dbReference type="InterPro" id="IPR004514">
    <property type="entry name" value="Gln-tRNA-synth"/>
</dbReference>
<dbReference type="InterPro" id="IPR050132">
    <property type="entry name" value="Gln/Glu-tRNA_Ligase"/>
</dbReference>
<dbReference type="InterPro" id="IPR022861">
    <property type="entry name" value="Gln_tRNA_ligase_bac"/>
</dbReference>
<dbReference type="InterPro" id="IPR000924">
    <property type="entry name" value="Glu/Gln-tRNA-synth"/>
</dbReference>
<dbReference type="InterPro" id="IPR020058">
    <property type="entry name" value="Glu/Gln-tRNA-synth_Ib_cat-dom"/>
</dbReference>
<dbReference type="InterPro" id="IPR020059">
    <property type="entry name" value="Glu/Gln-tRNA-synth_Ib_codon-bd"/>
</dbReference>
<dbReference type="InterPro" id="IPR020061">
    <property type="entry name" value="Glu_tRNA_lig_a-bdl"/>
</dbReference>
<dbReference type="InterPro" id="IPR020056">
    <property type="entry name" value="Rbsml_bL25/Gln-tRNA_synth_N"/>
</dbReference>
<dbReference type="InterPro" id="IPR011035">
    <property type="entry name" value="Ribosomal_bL25/Gln-tRNA_synth"/>
</dbReference>
<dbReference type="InterPro" id="IPR014729">
    <property type="entry name" value="Rossmann-like_a/b/a_fold"/>
</dbReference>
<dbReference type="InterPro" id="IPR049437">
    <property type="entry name" value="tRNA-synt_1c_C2"/>
</dbReference>
<dbReference type="NCBIfam" id="TIGR00440">
    <property type="entry name" value="glnS"/>
    <property type="match status" value="1"/>
</dbReference>
<dbReference type="NCBIfam" id="NF011291">
    <property type="entry name" value="PRK14703.1"/>
    <property type="match status" value="1"/>
</dbReference>
<dbReference type="PANTHER" id="PTHR43097:SF5">
    <property type="entry name" value="GLUTAMATE--TRNA LIGASE"/>
    <property type="match status" value="1"/>
</dbReference>
<dbReference type="PANTHER" id="PTHR43097">
    <property type="entry name" value="GLUTAMINE-TRNA LIGASE"/>
    <property type="match status" value="1"/>
</dbReference>
<dbReference type="Pfam" id="PF00749">
    <property type="entry name" value="tRNA-synt_1c"/>
    <property type="match status" value="2"/>
</dbReference>
<dbReference type="Pfam" id="PF03950">
    <property type="entry name" value="tRNA-synt_1c_C"/>
    <property type="match status" value="1"/>
</dbReference>
<dbReference type="Pfam" id="PF20974">
    <property type="entry name" value="tRNA-synt_1c_C2"/>
    <property type="match status" value="1"/>
</dbReference>
<dbReference type="PRINTS" id="PR00987">
    <property type="entry name" value="TRNASYNTHGLU"/>
</dbReference>
<dbReference type="SUPFAM" id="SSF52374">
    <property type="entry name" value="Nucleotidylyl transferase"/>
    <property type="match status" value="1"/>
</dbReference>
<dbReference type="SUPFAM" id="SSF50715">
    <property type="entry name" value="Ribosomal protein L25-like"/>
    <property type="match status" value="1"/>
</dbReference>
<dbReference type="PROSITE" id="PS00178">
    <property type="entry name" value="AA_TRNA_LIGASE_I"/>
    <property type="match status" value="1"/>
</dbReference>
<feature type="chain" id="PRO_0000195857" description="Glutamine--tRNA ligase">
    <location>
        <begin position="1"/>
        <end position="580"/>
    </location>
</feature>
<feature type="short sequence motif" description="'HIGH' region" evidence="1">
    <location>
        <begin position="41"/>
        <end position="51"/>
    </location>
</feature>
<feature type="short sequence motif" description="'KMSKS' region" evidence="1">
    <location>
        <begin position="292"/>
        <end position="296"/>
    </location>
</feature>
<feature type="binding site" evidence="1">
    <location>
        <begin position="42"/>
        <end position="44"/>
    </location>
    <ligand>
        <name>ATP</name>
        <dbReference type="ChEBI" id="CHEBI:30616"/>
    </ligand>
</feature>
<feature type="binding site" evidence="1">
    <location>
        <begin position="48"/>
        <end position="54"/>
    </location>
    <ligand>
        <name>ATP</name>
        <dbReference type="ChEBI" id="CHEBI:30616"/>
    </ligand>
</feature>
<feature type="binding site" evidence="1">
    <location>
        <position position="74"/>
    </location>
    <ligand>
        <name>L-glutamine</name>
        <dbReference type="ChEBI" id="CHEBI:58359"/>
    </ligand>
</feature>
<feature type="binding site" evidence="1">
    <location>
        <position position="218"/>
    </location>
    <ligand>
        <name>L-glutamine</name>
        <dbReference type="ChEBI" id="CHEBI:58359"/>
    </ligand>
</feature>
<feature type="binding site" evidence="1">
    <location>
        <position position="237"/>
    </location>
    <ligand>
        <name>ATP</name>
        <dbReference type="ChEBI" id="CHEBI:30616"/>
    </ligand>
</feature>
<feature type="binding site" evidence="1">
    <location>
        <begin position="285"/>
        <end position="286"/>
    </location>
    <ligand>
        <name>ATP</name>
        <dbReference type="ChEBI" id="CHEBI:30616"/>
    </ligand>
</feature>
<feature type="binding site" evidence="1">
    <location>
        <begin position="293"/>
        <end position="295"/>
    </location>
    <ligand>
        <name>ATP</name>
        <dbReference type="ChEBI" id="CHEBI:30616"/>
    </ligand>
</feature>
<name>SYQ_XYLFA</name>
<accession>Q9PDP1</accession>